<name>3SA6_NAJSP</name>
<dbReference type="EMBL" id="AF064100">
    <property type="protein sequence ID" value="AAC61318.1"/>
    <property type="molecule type" value="Genomic_DNA"/>
</dbReference>
<dbReference type="SMR" id="O73858"/>
<dbReference type="GO" id="GO:0005576">
    <property type="term" value="C:extracellular region"/>
    <property type="evidence" value="ECO:0007669"/>
    <property type="project" value="UniProtKB-SubCell"/>
</dbReference>
<dbReference type="GO" id="GO:0016020">
    <property type="term" value="C:membrane"/>
    <property type="evidence" value="ECO:0007669"/>
    <property type="project" value="UniProtKB-KW"/>
</dbReference>
<dbReference type="GO" id="GO:0044218">
    <property type="term" value="C:other organism cell membrane"/>
    <property type="evidence" value="ECO:0007669"/>
    <property type="project" value="UniProtKB-KW"/>
</dbReference>
<dbReference type="GO" id="GO:0090729">
    <property type="term" value="F:toxin activity"/>
    <property type="evidence" value="ECO:0007669"/>
    <property type="project" value="UniProtKB-KW"/>
</dbReference>
<dbReference type="GO" id="GO:0031640">
    <property type="term" value="P:killing of cells of another organism"/>
    <property type="evidence" value="ECO:0007669"/>
    <property type="project" value="UniProtKB-KW"/>
</dbReference>
<dbReference type="CDD" id="cd00206">
    <property type="entry name" value="TFP_snake_toxin"/>
    <property type="match status" value="1"/>
</dbReference>
<dbReference type="FunFam" id="2.10.60.10:FF:000024">
    <property type="entry name" value="Cytotoxin 1"/>
    <property type="match status" value="1"/>
</dbReference>
<dbReference type="Gene3D" id="2.10.60.10">
    <property type="entry name" value="CD59"/>
    <property type="match status" value="1"/>
</dbReference>
<dbReference type="InterPro" id="IPR003572">
    <property type="entry name" value="Cytotoxin_Cobra"/>
</dbReference>
<dbReference type="InterPro" id="IPR003571">
    <property type="entry name" value="Snake_3FTx"/>
</dbReference>
<dbReference type="InterPro" id="IPR045860">
    <property type="entry name" value="Snake_toxin-like_sf"/>
</dbReference>
<dbReference type="InterPro" id="IPR018354">
    <property type="entry name" value="Snake_toxin_con_site"/>
</dbReference>
<dbReference type="InterPro" id="IPR054131">
    <property type="entry name" value="Toxin_cobra-type"/>
</dbReference>
<dbReference type="Pfam" id="PF21947">
    <property type="entry name" value="Toxin_cobra-type"/>
    <property type="match status" value="1"/>
</dbReference>
<dbReference type="PRINTS" id="PR00282">
    <property type="entry name" value="CYTOTOXIN"/>
</dbReference>
<dbReference type="SUPFAM" id="SSF57302">
    <property type="entry name" value="Snake toxin-like"/>
    <property type="match status" value="1"/>
</dbReference>
<dbReference type="PROSITE" id="PS00272">
    <property type="entry name" value="SNAKE_TOXIN"/>
    <property type="match status" value="1"/>
</dbReference>
<keyword id="KW-0123">Cardiotoxin</keyword>
<keyword id="KW-0204">Cytolysis</keyword>
<keyword id="KW-1015">Disulfide bond</keyword>
<keyword id="KW-0472">Membrane</keyword>
<keyword id="KW-0964">Secreted</keyword>
<keyword id="KW-0732">Signal</keyword>
<keyword id="KW-1052">Target cell membrane</keyword>
<keyword id="KW-1053">Target membrane</keyword>
<keyword id="KW-0800">Toxin</keyword>
<evidence type="ECO:0000250" key="1"/>
<evidence type="ECO:0000250" key="2">
    <source>
        <dbReference type="UniProtKB" id="P60301"/>
    </source>
</evidence>
<evidence type="ECO:0000250" key="3">
    <source>
        <dbReference type="UniProtKB" id="P60304"/>
    </source>
</evidence>
<evidence type="ECO:0000305" key="4"/>
<proteinExistence type="inferred from homology"/>
<reference key="1">
    <citation type="journal article" date="1998" name="FEBS Lett.">
        <title>Structure and organization of the cardiotoxin genes in Naja naja sputatrix.</title>
        <authorList>
            <person name="Lachumanan R."/>
            <person name="Armugam A."/>
            <person name="Tan C.H."/>
            <person name="Jeyaseelan K."/>
        </authorList>
    </citation>
    <scope>NUCLEOTIDE SEQUENCE [GENOMIC DNA]</scope>
    <source>
        <tissue>Liver</tissue>
    </source>
</reference>
<organism>
    <name type="scientific">Naja sputatrix</name>
    <name type="common">Malayan spitting cobra</name>
    <name type="synonym">Naja naja sputatrix</name>
    <dbReference type="NCBI Taxonomy" id="33626"/>
    <lineage>
        <taxon>Eukaryota</taxon>
        <taxon>Metazoa</taxon>
        <taxon>Chordata</taxon>
        <taxon>Craniata</taxon>
        <taxon>Vertebrata</taxon>
        <taxon>Euteleostomi</taxon>
        <taxon>Lepidosauria</taxon>
        <taxon>Squamata</taxon>
        <taxon>Bifurcata</taxon>
        <taxon>Unidentata</taxon>
        <taxon>Episquamata</taxon>
        <taxon>Toxicofera</taxon>
        <taxon>Serpentes</taxon>
        <taxon>Colubroidea</taxon>
        <taxon>Elapidae</taxon>
        <taxon>Elapinae</taxon>
        <taxon>Naja</taxon>
    </lineage>
</organism>
<feature type="signal peptide" evidence="1">
    <location>
        <begin position="1" status="less than"/>
        <end position="2"/>
    </location>
</feature>
<feature type="chain" id="PRO_0000035402" description="Cytotoxin 6">
    <location>
        <begin position="3"/>
        <end position="62"/>
    </location>
</feature>
<feature type="disulfide bond" evidence="2">
    <location>
        <begin position="5"/>
        <end position="23"/>
    </location>
</feature>
<feature type="disulfide bond" evidence="2">
    <location>
        <begin position="16"/>
        <end position="40"/>
    </location>
</feature>
<feature type="disulfide bond" evidence="2">
    <location>
        <begin position="44"/>
        <end position="55"/>
    </location>
</feature>
<feature type="disulfide bond" evidence="2">
    <location>
        <begin position="56"/>
        <end position="61"/>
    </location>
</feature>
<feature type="non-terminal residue">
    <location>
        <position position="1"/>
    </location>
</feature>
<protein>
    <recommendedName>
        <fullName>Cytotoxin 6</fullName>
    </recommendedName>
    <alternativeName>
        <fullName>Cardiotoxin-6</fullName>
        <shortName>CTX-6</shortName>
        <shortName>Ctx6</shortName>
    </alternativeName>
</protein>
<accession>O73858</accession>
<sequence length="62" mass="7029">YTLKCNKLVPLFYKTCPAGKNLCYKMFMVSNKTVPVKRGCIDVCPKNSALVKYVCCNTDRCN</sequence>
<comment type="function">
    <text evidence="2 3">Shows cytolytic activity on many different cells by forming pore in lipid membranes. In vivo, increases heart rate or kills the animal by cardiac arrest. In addition, it binds to heparin with high affinity, interacts with Kv channel-interacting protein 1 (KCNIP1) in a calcium-independent manner, and binds to integrin alpha-V/beta-3 (ITGAV/ITGB3) with moderate affinity.</text>
</comment>
<comment type="subunit">
    <text evidence="2">Monomer in solution; Homodimer and oligomer in the presence of negatively charged lipids forming a pore with a size ranging between 20 and 30 Angstroms.</text>
</comment>
<comment type="subcellular location">
    <subcellularLocation>
        <location evidence="1">Secreted</location>
    </subcellularLocation>
    <subcellularLocation>
        <location evidence="2">Target cell membrane</location>
    </subcellularLocation>
</comment>
<comment type="tissue specificity">
    <text evidence="4">Expressed by the venom gland.</text>
</comment>
<comment type="miscellaneous">
    <text evidence="4">Is classified as a S-type cytotoxin, since a serine residue stands at position 30 (Ser-29 in standard classification).</text>
</comment>
<comment type="similarity">
    <text evidence="4">Belongs to the three-finger toxin family. Short-chain subfamily. Type IA cytotoxin sub-subfamily.</text>
</comment>